<name>ADDB_BACVZ</name>
<accession>A7Z367</accession>
<dbReference type="EC" id="3.1.-.-" evidence="1"/>
<dbReference type="EMBL" id="CP000560">
    <property type="protein sequence ID" value="ABS73443.1"/>
    <property type="molecule type" value="Genomic_DNA"/>
</dbReference>
<dbReference type="RefSeq" id="WP_012117250.1">
    <property type="nucleotide sequence ID" value="NC_009725.2"/>
</dbReference>
<dbReference type="SMR" id="A7Z367"/>
<dbReference type="GeneID" id="93080216"/>
<dbReference type="KEGG" id="bay:RBAM_010790"/>
<dbReference type="HOGENOM" id="CLU_007838_0_0_9"/>
<dbReference type="Proteomes" id="UP000001120">
    <property type="component" value="Chromosome"/>
</dbReference>
<dbReference type="GO" id="GO:0051539">
    <property type="term" value="F:4 iron, 4 sulfur cluster binding"/>
    <property type="evidence" value="ECO:0007669"/>
    <property type="project" value="UniProtKB-KW"/>
</dbReference>
<dbReference type="GO" id="GO:0008409">
    <property type="term" value="F:5'-3' exonuclease activity"/>
    <property type="evidence" value="ECO:0007669"/>
    <property type="project" value="UniProtKB-UniRule"/>
</dbReference>
<dbReference type="GO" id="GO:0005524">
    <property type="term" value="F:ATP binding"/>
    <property type="evidence" value="ECO:0007669"/>
    <property type="project" value="UniProtKB-UniRule"/>
</dbReference>
<dbReference type="GO" id="GO:0003690">
    <property type="term" value="F:double-stranded DNA binding"/>
    <property type="evidence" value="ECO:0007669"/>
    <property type="project" value="UniProtKB-UniRule"/>
</dbReference>
<dbReference type="GO" id="GO:0004386">
    <property type="term" value="F:helicase activity"/>
    <property type="evidence" value="ECO:0007669"/>
    <property type="project" value="UniProtKB-KW"/>
</dbReference>
<dbReference type="GO" id="GO:0046872">
    <property type="term" value="F:metal ion binding"/>
    <property type="evidence" value="ECO:0007669"/>
    <property type="project" value="UniProtKB-KW"/>
</dbReference>
<dbReference type="GO" id="GO:0000724">
    <property type="term" value="P:double-strand break repair via homologous recombination"/>
    <property type="evidence" value="ECO:0007669"/>
    <property type="project" value="UniProtKB-UniRule"/>
</dbReference>
<dbReference type="Gene3D" id="3.90.320.10">
    <property type="match status" value="1"/>
</dbReference>
<dbReference type="Gene3D" id="6.10.140.1030">
    <property type="match status" value="1"/>
</dbReference>
<dbReference type="Gene3D" id="3.40.50.300">
    <property type="entry name" value="P-loop containing nucleotide triphosphate hydrolases"/>
    <property type="match status" value="3"/>
</dbReference>
<dbReference type="HAMAP" id="MF_01452">
    <property type="entry name" value="AddB_type1"/>
    <property type="match status" value="1"/>
</dbReference>
<dbReference type="InterPro" id="IPR049035">
    <property type="entry name" value="ADDB_N"/>
</dbReference>
<dbReference type="InterPro" id="IPR014140">
    <property type="entry name" value="DNA_helicase_suAddB"/>
</dbReference>
<dbReference type="InterPro" id="IPR014017">
    <property type="entry name" value="DNA_helicase_UvrD-like_C"/>
</dbReference>
<dbReference type="InterPro" id="IPR027417">
    <property type="entry name" value="P-loop_NTPase"/>
</dbReference>
<dbReference type="InterPro" id="IPR011604">
    <property type="entry name" value="PDDEXK-like_dom_sf"/>
</dbReference>
<dbReference type="InterPro" id="IPR038726">
    <property type="entry name" value="PDDEXK_AddAB-type"/>
</dbReference>
<dbReference type="NCBIfam" id="TIGR02773">
    <property type="entry name" value="addB_Gpos"/>
    <property type="match status" value="1"/>
</dbReference>
<dbReference type="PANTHER" id="PTHR30591">
    <property type="entry name" value="RECBCD ENZYME SUBUNIT RECC"/>
    <property type="match status" value="1"/>
</dbReference>
<dbReference type="PANTHER" id="PTHR30591:SF1">
    <property type="entry name" value="RECBCD ENZYME SUBUNIT RECC"/>
    <property type="match status" value="1"/>
</dbReference>
<dbReference type="Pfam" id="PF21445">
    <property type="entry name" value="ADDB_N"/>
    <property type="match status" value="1"/>
</dbReference>
<dbReference type="Pfam" id="PF12705">
    <property type="entry name" value="PDDEXK_1"/>
    <property type="match status" value="1"/>
</dbReference>
<dbReference type="SUPFAM" id="SSF52540">
    <property type="entry name" value="P-loop containing nucleoside triphosphate hydrolases"/>
    <property type="match status" value="1"/>
</dbReference>
<dbReference type="PROSITE" id="PS51198">
    <property type="entry name" value="UVRD_HELICASE_ATP_BIND"/>
    <property type="match status" value="1"/>
</dbReference>
<dbReference type="PROSITE" id="PS51217">
    <property type="entry name" value="UVRD_HELICASE_CTER"/>
    <property type="match status" value="1"/>
</dbReference>
<organism>
    <name type="scientific">Bacillus velezensis (strain DSM 23117 / BGSC 10A6 / LMG 26770 / FZB42)</name>
    <name type="common">Bacillus amyloliquefaciens subsp. plantarum</name>
    <dbReference type="NCBI Taxonomy" id="326423"/>
    <lineage>
        <taxon>Bacteria</taxon>
        <taxon>Bacillati</taxon>
        <taxon>Bacillota</taxon>
        <taxon>Bacilli</taxon>
        <taxon>Bacillales</taxon>
        <taxon>Bacillaceae</taxon>
        <taxon>Bacillus</taxon>
        <taxon>Bacillus amyloliquefaciens group</taxon>
    </lineage>
</organism>
<proteinExistence type="inferred from homology"/>
<evidence type="ECO:0000255" key="1">
    <source>
        <dbReference type="HAMAP-Rule" id="MF_01452"/>
    </source>
</evidence>
<sequence>MGVEFLVGRSGSGKTRLIIDSIQDELRREPFGKPIIFLVPDQMTFLMEYELAKTPDIGGMIRAQVFSFSRLAWRVLQHTGGMNRPFVTTTGVQMLLRKLIEEHKHEFKVYQKASDKTGFTEQVERMLTEFKRYCIEPEDVRRMAESGTASEYRGERMLSEKLHDLGILYQQMERSLAGHYLHSEDYLTLLAQQIPLADVVKGAHVYVDGFYQFTPQELRVLEQLIMHAEHVTFSLTADSPSAEQAPDELDLFRMTGSTYYKLYQTAKELNADISCKELHGTKRHQHAPELACIESQYDVRPAAAYTGGQEAFTVMQAQNRRAELEGIAREIQSLVRDGGYRYKDMAILIRQPEDYKDLLKEVFADYGLPYFIDGKASMQHHPLIEFIRSSLDVVKGNWRYEAVFRCAKTELLFPLDQPEQKIREQVDQLENYCIAYGIKGERWTSGERFVYRRFVSLDEDFAQTDQEIEMEHMLNETKEWMAAPLVKLQNRMKKAKTVQSMAEALYLFLEDTDVPLKLDRKRQRAEEAGNMIEAQQHGQAWDAVIQLLEEFAGMMGEDEISLALFQQMLETGTESLHFSLIPPALDQVFVGNMDLSRMYGTSCTFVIGANDGVLPARPDENGVLSDDDREWLKAVGVELSSAGRERLLDEHFLIYMALSSPSDRLYVSYPIADAEGKTLLPSIVVNRLGELFPDHQEKLSAADPEQVSEEEQLQYLVNKQVAQTYTASQLRLWTREYEISDVWWSAYNVLMKEPDHRRAKKLFSSLFFRNEAKRLERPVSRQLYGEHIKGSVSRMEAFNACQFSHFASHGLQLKERQFFKLDAPDIGQLFHSSLKLISDRLREQKLEWRDLTKDQCRNFSYEAVERLAPKLQKEILLSSNRHFYVKEKLQKIVTRVSGILSEHAKASGFVPVGLELGFGGSGPLPPLTFTLKNGCTMELVGRIDRVDKAESSKGLLLRIVDYKSSDRGLDLAEVYYGLALQMLTYLDLSITHSEDWLGMKATPAGVLYFHIHDPMIQASLPMGLDEIEQEIFKKFKMKGLLLGDREAISLMDTTLEEGRSNIVNAGLKKDGSLRSDSAAVSEQDFHLLTDHVRRTFEQAGEAITDGLVSITPYKLKDKTPCTYCAFQSVCQFDESLKENEYRSLKAEKDGTILDWLKKEADDDANS</sequence>
<protein>
    <recommendedName>
        <fullName evidence="1">ATP-dependent helicase/deoxyribonuclease subunit B</fullName>
        <ecNumber evidence="1">3.1.-.-</ecNumber>
    </recommendedName>
    <alternativeName>
        <fullName evidence="1">ATP-dependent helicase/nuclease subunit AddB</fullName>
    </alternativeName>
</protein>
<gene>
    <name evidence="1" type="primary">addB</name>
    <name type="ordered locus">RBAM_010790</name>
</gene>
<feature type="chain" id="PRO_0000379151" description="ATP-dependent helicase/deoxyribonuclease subunit B">
    <location>
        <begin position="1"/>
        <end position="1166"/>
    </location>
</feature>
<feature type="domain" description="UvrD-like helicase ATP-binding" evidence="1">
    <location>
        <begin position="1"/>
        <end position="390"/>
    </location>
</feature>
<feature type="domain" description="UvrD-like helicase C-terminal" evidence="1">
    <location>
        <begin position="281"/>
        <end position="586"/>
    </location>
</feature>
<feature type="binding site" evidence="1">
    <location>
        <begin position="8"/>
        <end position="15"/>
    </location>
    <ligand>
        <name>ATP</name>
        <dbReference type="ChEBI" id="CHEBI:30616"/>
    </ligand>
</feature>
<feature type="binding site" evidence="1">
    <location>
        <position position="801"/>
    </location>
    <ligand>
        <name>[4Fe-4S] cluster</name>
        <dbReference type="ChEBI" id="CHEBI:49883"/>
    </ligand>
</feature>
<feature type="binding site" evidence="1">
    <location>
        <position position="1121"/>
    </location>
    <ligand>
        <name>[4Fe-4S] cluster</name>
        <dbReference type="ChEBI" id="CHEBI:49883"/>
    </ligand>
</feature>
<feature type="binding site" evidence="1">
    <location>
        <position position="1124"/>
    </location>
    <ligand>
        <name>[4Fe-4S] cluster</name>
        <dbReference type="ChEBI" id="CHEBI:49883"/>
    </ligand>
</feature>
<feature type="binding site" evidence="1">
    <location>
        <position position="1130"/>
    </location>
    <ligand>
        <name>[4Fe-4S] cluster</name>
        <dbReference type="ChEBI" id="CHEBI:49883"/>
    </ligand>
</feature>
<reference key="1">
    <citation type="journal article" date="2007" name="Nat. Biotechnol.">
        <title>Comparative analysis of the complete genome sequence of the plant growth-promoting bacterium Bacillus amyloliquefaciens FZB42.</title>
        <authorList>
            <person name="Chen X.H."/>
            <person name="Koumoutsi A."/>
            <person name="Scholz R."/>
            <person name="Eisenreich A."/>
            <person name="Schneider K."/>
            <person name="Heinemeyer I."/>
            <person name="Morgenstern B."/>
            <person name="Voss B."/>
            <person name="Hess W.R."/>
            <person name="Reva O."/>
            <person name="Junge H."/>
            <person name="Voigt B."/>
            <person name="Jungblut P.R."/>
            <person name="Vater J."/>
            <person name="Suessmuth R."/>
            <person name="Liesegang H."/>
            <person name="Strittmatter A."/>
            <person name="Gottschalk G."/>
            <person name="Borriss R."/>
        </authorList>
    </citation>
    <scope>NUCLEOTIDE SEQUENCE [LARGE SCALE GENOMIC DNA]</scope>
    <source>
        <strain>DSM 23117 / BGSC 10A6 / LMG 26770 / FZB42</strain>
    </source>
</reference>
<keyword id="KW-0004">4Fe-4S</keyword>
<keyword id="KW-0067">ATP-binding</keyword>
<keyword id="KW-0227">DNA damage</keyword>
<keyword id="KW-0234">DNA repair</keyword>
<keyword id="KW-0238">DNA-binding</keyword>
<keyword id="KW-0269">Exonuclease</keyword>
<keyword id="KW-0347">Helicase</keyword>
<keyword id="KW-0378">Hydrolase</keyword>
<keyword id="KW-0408">Iron</keyword>
<keyword id="KW-0411">Iron-sulfur</keyword>
<keyword id="KW-0479">Metal-binding</keyword>
<keyword id="KW-0540">Nuclease</keyword>
<keyword id="KW-0547">Nucleotide-binding</keyword>
<comment type="function">
    <text evidence="1">The heterodimer acts as both an ATP-dependent DNA helicase and an ATP-dependent, dual-direction single-stranded exonuclease. Recognizes the chi site generating a DNA molecule suitable for the initiation of homologous recombination. The AddB subunit has 5' -&gt; 3' nuclease activity but not helicase activity.</text>
</comment>
<comment type="cofactor">
    <cofactor evidence="1">
        <name>Mg(2+)</name>
        <dbReference type="ChEBI" id="CHEBI:18420"/>
    </cofactor>
</comment>
<comment type="cofactor">
    <cofactor evidence="1">
        <name>[4Fe-4S] cluster</name>
        <dbReference type="ChEBI" id="CHEBI:49883"/>
    </cofactor>
    <text evidence="1">Binds 1 [4Fe-4S] cluster.</text>
</comment>
<comment type="subunit">
    <text evidence="1">Heterodimer of AddA and AddB.</text>
</comment>
<comment type="miscellaneous">
    <text evidence="1">Despite having conserved helicase domains, this subunit does not have helicase activity.</text>
</comment>
<comment type="similarity">
    <text evidence="1">Belongs to the helicase family. AddB/RexB type 1 subfamily.</text>
</comment>